<organism>
    <name type="scientific">Mycobacterium tuberculosis (strain ATCC 25177 / H37Ra)</name>
    <dbReference type="NCBI Taxonomy" id="419947"/>
    <lineage>
        <taxon>Bacteria</taxon>
        <taxon>Bacillati</taxon>
        <taxon>Actinomycetota</taxon>
        <taxon>Actinomycetes</taxon>
        <taxon>Mycobacteriales</taxon>
        <taxon>Mycobacteriaceae</taxon>
        <taxon>Mycobacterium</taxon>
        <taxon>Mycobacterium tuberculosis complex</taxon>
    </lineage>
</organism>
<keyword id="KW-1003">Cell membrane</keyword>
<keyword id="KW-0449">Lipoprotein</keyword>
<keyword id="KW-0472">Membrane</keyword>
<keyword id="KW-0564">Palmitate</keyword>
<keyword id="KW-1185">Reference proteome</keyword>
<keyword id="KW-0732">Signal</keyword>
<keyword id="KW-0813">Transport</keyword>
<keyword id="KW-0843">Virulence</keyword>
<proteinExistence type="evidence at protein level"/>
<evidence type="ECO:0000250" key="1">
    <source>
        <dbReference type="UniProtKB" id="P9WK61"/>
    </source>
</evidence>
<evidence type="ECO:0000255" key="2">
    <source>
        <dbReference type="PROSITE-ProRule" id="PRU00303"/>
    </source>
</evidence>
<evidence type="ECO:0000256" key="3">
    <source>
        <dbReference type="SAM" id="MobiDB-lite"/>
    </source>
</evidence>
<evidence type="ECO:0000269" key="4">
    <source>
    </source>
</evidence>
<evidence type="ECO:0000269" key="5">
    <source>
    </source>
</evidence>
<evidence type="ECO:0000269" key="6">
    <source>
    </source>
</evidence>
<evidence type="ECO:0000303" key="7">
    <source>
    </source>
</evidence>
<evidence type="ECO:0000305" key="8"/>
<gene>
    <name type="primary">lpqH</name>
    <name type="ordered locus">MRA_3801</name>
</gene>
<protein>
    <recommendedName>
        <fullName>Lipoprotein LpqH</fullName>
    </recommendedName>
    <alternativeName>
        <fullName evidence="7">19 kDa lipoprotein</fullName>
    </alternativeName>
    <alternativeName>
        <fullName>Putative transporter LpqH</fullName>
    </alternativeName>
</protein>
<reference key="1">
    <citation type="journal article" date="2008" name="PLoS ONE">
        <title>Genetic basis of virulence attenuation revealed by comparative genomic analysis of Mycobacterium tuberculosis strain H37Ra versus H37Rv.</title>
        <authorList>
            <person name="Zheng H."/>
            <person name="Lu L."/>
            <person name="Wang B."/>
            <person name="Pu S."/>
            <person name="Zhang X."/>
            <person name="Zhu G."/>
            <person name="Shi W."/>
            <person name="Zhang L."/>
            <person name="Wang H."/>
            <person name="Wang S."/>
            <person name="Zhao G."/>
            <person name="Zhang Y."/>
        </authorList>
    </citation>
    <scope>NUCLEOTIDE SEQUENCE [LARGE SCALE GENOMIC DNA]</scope>
    <source>
        <strain>ATCC 25177 / H37Ra</strain>
    </source>
</reference>
<reference key="2">
    <citation type="journal article" date="2006" name="J. Immunol.">
        <title>Mycobacterium tuberculosis 19-kDa lipoprotein inhibits IFN-gamma-induced chromatin remodeling of MHC2TA by TLR2 and MAPK signaling.</title>
        <authorList>
            <person name="Pennini M.E."/>
            <person name="Pai R.K."/>
            <person name="Schultz D.C."/>
            <person name="Boom W.H."/>
            <person name="Harding C.V."/>
        </authorList>
    </citation>
    <scope>FUNCTION</scope>
    <source>
        <strain>ATCC 25177 / H37Ra</strain>
    </source>
</reference>
<reference key="3">
    <citation type="journal article" date="2009" name="Cell. Immunol.">
        <title>TLR2 and its co-receptors determine responses of macrophages and dendritic cells to lipoproteins of Mycobacterium tuberculosis.</title>
        <authorList>
            <person name="Drage M.G."/>
            <person name="Pecora N.D."/>
            <person name="Hise A.G."/>
            <person name="Febbraio M."/>
            <person name="Silverstein R.L."/>
            <person name="Golenbock D.T."/>
            <person name="Boom W.H."/>
            <person name="Harding C.V."/>
        </authorList>
    </citation>
    <scope>FUNCTION IN INFECTION</scope>
    <source>
        <strain>ATCC 25177 / H37Ra</strain>
    </source>
</reference>
<reference key="4">
    <citation type="journal article" date="2015" name="J. Immunol.">
        <title>Bacterial membrane vesicles mediate the release of Mycobacterium tuberculosis lipoglycans and lipoproteins from infected macrophages.</title>
        <authorList>
            <person name="Athman J.J."/>
            <person name="Wang Y."/>
            <person name="McDonald D.J."/>
            <person name="Boom W.H."/>
            <person name="Harding C.V."/>
            <person name="Wearsch P.A."/>
        </authorList>
    </citation>
    <scope>SUBCELLULAR LOCATION</scope>
    <source>
        <strain>ATCC 25177 / H37Ra</strain>
    </source>
</reference>
<reference key="5">
    <citation type="journal article" date="2010" name="Nat. Rev. Microbiol.">
        <title>Regulation of antigen presentation by Mycobacterium tuberculosis: a role for Toll-like receptors.</title>
        <authorList>
            <person name="Harding C.V."/>
            <person name="Boom W.H."/>
        </authorList>
    </citation>
    <scope>REVIEW</scope>
</reference>
<comment type="function">
    <text evidence="1 4 5">Might be involved in ligand transport (By similarity). A host TLR2 agonist (toll-like receptor), shown experimentally for human and mouse (PubMed:16547269, PubMed:19362712). Acts in host macrophages to modify the expression of different subsets of interferon-gamma-induced (IFN-g) genes, possibly by chromatin remodeling (PubMed:19362712). Represses IFN-g induction of mouse macrophage MHC class II transactivator (Ciita), greatly enhances IFN-g induction of mouse macrophage inducible nitric oxide synthase (iNOS, Nos2) (PubMed:19362712). At least for Ciita repression, acts via mouse TLR2 and MAPK to inhibit IFN-g-induced enrichment of acetylated histones H3 and H4 at the host Ciita but not at Nos2 loci (PubMed:19362712). Host Ciita regulates the expression of MHC-II and other genes involved in Ag processing and presentation, thus its repression contributes to immune envasion by M.tuberculosis (PubMed:19362712). Requires both host TLR1 and TLR2 as coreceptors to elicit host response in mouse, although TLR6 may play a redundant role, and a partial requirement for CD14 as an accessory receptor (PubMed:19362712).</text>
</comment>
<comment type="subcellular location">
    <subcellularLocation>
        <location evidence="2">Cell membrane</location>
        <topology evidence="2">Lipid-anchor</topology>
    </subcellularLocation>
    <subcellularLocation>
        <location evidence="6">Extracellular vesicle</location>
        <location evidence="6">Bacterial extracellular vesicle</location>
    </subcellularLocation>
    <text evidence="6">Found in bacterial extracytoplasmic vesicles both in culture supernatant and isolated from infected mouse macrophages: there is almost no co-localization of mouse and M.tuberculosis markers in the vesicles, suggesting they do not mix (PubMed:26109643).</text>
</comment>
<comment type="domain">
    <text evidence="1">Forms a U-shaped beta-half-barrel with a large hydrophobic cavity.</text>
</comment>
<comment type="PTM">
    <text evidence="1">Modified by Lgt on Cys-22 with an S-linked diacylglycerol with a mixture of C16, C18 and C19 fatty acids, signal peptide is removed by LspA, modifed by Lnt with an amide-linked mixture of C16 and C19 fatty acids.</text>
</comment>
<comment type="similarity">
    <text evidence="8">Belongs to the mycobacterial 19 kDa antigen family.</text>
</comment>
<sequence length="159" mass="15147">MKRGLTVAVAGAAILVAGLSGCSSNKSTTGSGETTTAAGTTASPGAASGPKVVIDGKDQNVTGSVVCTTAAGNVNIAIGGAATGIAAVLTDGNPPEVKSVGLGNVNGVTLGYTSGTGQGNASATKDGSHYKITGTATGVDMANPMSPVNKSFEIEVTCS</sequence>
<dbReference type="EMBL" id="CP000611">
    <property type="protein sequence ID" value="ABQ75590.1"/>
    <property type="molecule type" value="Genomic_DNA"/>
</dbReference>
<dbReference type="RefSeq" id="WP_003420544.1">
    <property type="nucleotide sequence ID" value="NZ_CP016972.1"/>
</dbReference>
<dbReference type="SMR" id="A5U990"/>
<dbReference type="GeneID" id="45427763"/>
<dbReference type="KEGG" id="mra:MRA_3801"/>
<dbReference type="eggNOG" id="ENOG502ZGGY">
    <property type="taxonomic scope" value="Bacteria"/>
</dbReference>
<dbReference type="HOGENOM" id="CLU_117599_0_0_11"/>
<dbReference type="Proteomes" id="UP000001988">
    <property type="component" value="Chromosome"/>
</dbReference>
<dbReference type="GO" id="GO:0097691">
    <property type="term" value="C:bacterial extracellular vesicle"/>
    <property type="evidence" value="ECO:0000314"/>
    <property type="project" value="UniProtKB"/>
</dbReference>
<dbReference type="GO" id="GO:0005886">
    <property type="term" value="C:plasma membrane"/>
    <property type="evidence" value="ECO:0007669"/>
    <property type="project" value="UniProtKB-SubCell"/>
</dbReference>
<dbReference type="InterPro" id="IPR008691">
    <property type="entry name" value="LpqH"/>
</dbReference>
<dbReference type="Pfam" id="PF05481">
    <property type="entry name" value="Myco_19_kDa"/>
    <property type="match status" value="1"/>
</dbReference>
<dbReference type="PROSITE" id="PS51257">
    <property type="entry name" value="PROKAR_LIPOPROTEIN"/>
    <property type="match status" value="1"/>
</dbReference>
<accession>A5U990</accession>
<name>LPQH_MYCTA</name>
<feature type="signal peptide" evidence="2">
    <location>
        <begin position="1"/>
        <end position="21"/>
    </location>
</feature>
<feature type="chain" id="PRO_0000434897" description="Lipoprotein LpqH" evidence="2">
    <location>
        <begin position="22"/>
        <end position="159"/>
    </location>
</feature>
<feature type="region of interest" description="Disordered" evidence="3">
    <location>
        <begin position="24"/>
        <end position="51"/>
    </location>
</feature>
<feature type="compositionally biased region" description="Low complexity" evidence="3">
    <location>
        <begin position="27"/>
        <end position="49"/>
    </location>
</feature>
<feature type="lipid moiety-binding region" description="N-palmitoyl cysteine" evidence="2">
    <location>
        <position position="22"/>
    </location>
</feature>
<feature type="lipid moiety-binding region" description="S-diacylglycerol cysteine" evidence="2">
    <location>
        <position position="22"/>
    </location>
</feature>